<accession>B5R941</accession>
<keyword id="KW-0106">Calcium</keyword>
<keyword id="KW-0249">Electron transport</keyword>
<keyword id="KW-0349">Heme</keyword>
<keyword id="KW-0408">Iron</keyword>
<keyword id="KW-0479">Metal-binding</keyword>
<keyword id="KW-0560">Oxidoreductase</keyword>
<keyword id="KW-0574">Periplasm</keyword>
<keyword id="KW-0732">Signal</keyword>
<keyword id="KW-0813">Transport</keyword>
<feature type="signal peptide" evidence="1">
    <location>
        <begin position="1"/>
        <end position="26"/>
    </location>
</feature>
<feature type="chain" id="PRO_5000398163" description="Cytochrome c-552">
    <location>
        <begin position="27"/>
        <end position="478"/>
    </location>
</feature>
<feature type="binding site" description="axial binding residue" evidence="1">
    <location>
        <position position="94"/>
    </location>
    <ligand>
        <name>heme c</name>
        <dbReference type="ChEBI" id="CHEBI:61717"/>
        <label>3</label>
    </ligand>
    <ligandPart>
        <name>Fe</name>
        <dbReference type="ChEBI" id="CHEBI:18248"/>
    </ligandPart>
</feature>
<feature type="binding site" description="covalent" evidence="1">
    <location>
        <position position="122"/>
    </location>
    <ligand>
        <name>heme</name>
        <dbReference type="ChEBI" id="CHEBI:30413"/>
        <label>1</label>
    </ligand>
</feature>
<feature type="binding site" description="covalent" evidence="1">
    <location>
        <position position="125"/>
    </location>
    <ligand>
        <name>heme</name>
        <dbReference type="ChEBI" id="CHEBI:30413"/>
        <label>1</label>
    </ligand>
</feature>
<feature type="binding site" description="axial binding residue" evidence="1">
    <location>
        <position position="126"/>
    </location>
    <ligand>
        <name>heme</name>
        <dbReference type="ChEBI" id="CHEBI:30413"/>
        <label>1</label>
    </ligand>
    <ligandPart>
        <name>Fe</name>
        <dbReference type="ChEBI" id="CHEBI:18248"/>
    </ligandPart>
</feature>
<feature type="binding site" description="covalent" evidence="1">
    <location>
        <position position="160"/>
    </location>
    <ligand>
        <name>heme c</name>
        <dbReference type="ChEBI" id="CHEBI:61717"/>
        <label>2</label>
    </ligand>
</feature>
<feature type="binding site" description="covalent" evidence="1">
    <location>
        <position position="163"/>
    </location>
    <ligand>
        <name>heme c</name>
        <dbReference type="ChEBI" id="CHEBI:61717"/>
        <label>2</label>
    </ligand>
</feature>
<feature type="binding site" description="axial binding residue" evidence="1">
    <location>
        <position position="164"/>
    </location>
    <ligand>
        <name>heme c</name>
        <dbReference type="ChEBI" id="CHEBI:61717"/>
        <label>2</label>
    </ligand>
    <ligandPart>
        <name>Fe</name>
        <dbReference type="ChEBI" id="CHEBI:18248"/>
    </ligandPart>
</feature>
<feature type="binding site" description="covalent" evidence="1">
    <location>
        <position position="209"/>
    </location>
    <ligand>
        <name>heme c</name>
        <dbReference type="ChEBI" id="CHEBI:61717"/>
        <label>3</label>
    </ligand>
</feature>
<feature type="binding site" description="covalent" evidence="1">
    <location>
        <position position="212"/>
    </location>
    <ligand>
        <name>heme c</name>
        <dbReference type="ChEBI" id="CHEBI:61717"/>
        <label>3</label>
    </ligand>
</feature>
<feature type="binding site" description="axial binding residue" evidence="1">
    <location>
        <position position="213"/>
    </location>
    <ligand>
        <name>heme c</name>
        <dbReference type="ChEBI" id="CHEBI:61717"/>
        <label>3</label>
    </ligand>
    <ligandPart>
        <name>Fe</name>
        <dbReference type="ChEBI" id="CHEBI:18248"/>
    </ligandPart>
</feature>
<feature type="binding site" evidence="1">
    <location>
        <position position="215"/>
    </location>
    <ligand>
        <name>Ca(2+)</name>
        <dbReference type="ChEBI" id="CHEBI:29108"/>
    </ligand>
</feature>
<feature type="binding site" evidence="1">
    <location>
        <position position="216"/>
    </location>
    <ligand>
        <name>Ca(2+)</name>
        <dbReference type="ChEBI" id="CHEBI:29108"/>
    </ligand>
</feature>
<feature type="binding site" evidence="1">
    <location>
        <position position="216"/>
    </location>
    <ligand>
        <name>substrate</name>
    </ligand>
</feature>
<feature type="binding site" evidence="1">
    <location>
        <position position="261"/>
    </location>
    <ligand>
        <name>Ca(2+)</name>
        <dbReference type="ChEBI" id="CHEBI:29108"/>
    </ligand>
</feature>
<feature type="binding site" evidence="1">
    <location>
        <position position="263"/>
    </location>
    <ligand>
        <name>Ca(2+)</name>
        <dbReference type="ChEBI" id="CHEBI:29108"/>
    </ligand>
</feature>
<feature type="binding site" evidence="1">
    <location>
        <position position="264"/>
    </location>
    <ligand>
        <name>substrate</name>
    </ligand>
</feature>
<feature type="binding site" description="axial binding residue" evidence="1">
    <location>
        <position position="275"/>
    </location>
    <ligand>
        <name>heme c</name>
        <dbReference type="ChEBI" id="CHEBI:61717"/>
        <label>5</label>
    </ligand>
    <ligandPart>
        <name>Fe</name>
        <dbReference type="ChEBI" id="CHEBI:18248"/>
    </ligandPart>
</feature>
<feature type="binding site" description="covalent" evidence="1">
    <location>
        <position position="282"/>
    </location>
    <ligand>
        <name>heme c</name>
        <dbReference type="ChEBI" id="CHEBI:61717"/>
        <label>4</label>
    </ligand>
</feature>
<feature type="binding site" description="covalent" evidence="1">
    <location>
        <position position="285"/>
    </location>
    <ligand>
        <name>heme c</name>
        <dbReference type="ChEBI" id="CHEBI:61717"/>
        <label>4</label>
    </ligand>
</feature>
<feature type="binding site" description="axial binding residue" evidence="1">
    <location>
        <position position="286"/>
    </location>
    <ligand>
        <name>heme c</name>
        <dbReference type="ChEBI" id="CHEBI:61717"/>
        <label>4</label>
    </ligand>
    <ligandPart>
        <name>Fe</name>
        <dbReference type="ChEBI" id="CHEBI:18248"/>
    </ligandPart>
</feature>
<feature type="binding site" description="axial binding residue" evidence="1">
    <location>
        <position position="301"/>
    </location>
    <ligand>
        <name>heme c</name>
        <dbReference type="ChEBI" id="CHEBI:61717"/>
        <label>2</label>
    </ligand>
    <ligandPart>
        <name>Fe</name>
        <dbReference type="ChEBI" id="CHEBI:18248"/>
    </ligandPart>
</feature>
<feature type="binding site" description="covalent" evidence="1">
    <location>
        <position position="314"/>
    </location>
    <ligand>
        <name>heme c</name>
        <dbReference type="ChEBI" id="CHEBI:61717"/>
        <label>5</label>
    </ligand>
</feature>
<feature type="binding site" description="covalent" evidence="1">
    <location>
        <position position="317"/>
    </location>
    <ligand>
        <name>heme c</name>
        <dbReference type="ChEBI" id="CHEBI:61717"/>
        <label>5</label>
    </ligand>
</feature>
<feature type="binding site" description="axial binding residue" evidence="1">
    <location>
        <position position="318"/>
    </location>
    <ligand>
        <name>heme c</name>
        <dbReference type="ChEBI" id="CHEBI:61717"/>
        <label>5</label>
    </ligand>
    <ligandPart>
        <name>Fe</name>
        <dbReference type="ChEBI" id="CHEBI:18248"/>
    </ligandPart>
</feature>
<feature type="binding site" description="axial binding residue" evidence="1">
    <location>
        <position position="393"/>
    </location>
    <ligand>
        <name>heme c</name>
        <dbReference type="ChEBI" id="CHEBI:61717"/>
        <label>4</label>
    </ligand>
    <ligandPart>
        <name>Fe</name>
        <dbReference type="ChEBI" id="CHEBI:18248"/>
    </ligandPart>
</feature>
<evidence type="ECO:0000255" key="1">
    <source>
        <dbReference type="HAMAP-Rule" id="MF_01182"/>
    </source>
</evidence>
<protein>
    <recommendedName>
        <fullName evidence="1">Cytochrome c-552</fullName>
        <ecNumber evidence="1">1.7.2.2</ecNumber>
    </recommendedName>
    <alternativeName>
        <fullName evidence="1">Ammonia-forming cytochrome c nitrite reductase</fullName>
        <shortName evidence="1">Cytochrome c nitrite reductase</shortName>
    </alternativeName>
</protein>
<name>NRFA_SALG2</name>
<dbReference type="EC" id="1.7.2.2" evidence="1"/>
<dbReference type="EMBL" id="AM933173">
    <property type="protein sequence ID" value="CAR39888.1"/>
    <property type="molecule type" value="Genomic_DNA"/>
</dbReference>
<dbReference type="RefSeq" id="WP_000101770.1">
    <property type="nucleotide sequence ID" value="NC_011274.1"/>
</dbReference>
<dbReference type="SMR" id="B5R941"/>
<dbReference type="KEGG" id="seg:SG4121"/>
<dbReference type="HOGENOM" id="CLU_035040_1_0_6"/>
<dbReference type="UniPathway" id="UPA00653"/>
<dbReference type="Proteomes" id="UP000008321">
    <property type="component" value="Chromosome"/>
</dbReference>
<dbReference type="GO" id="GO:0030288">
    <property type="term" value="C:outer membrane-bounded periplasmic space"/>
    <property type="evidence" value="ECO:0007669"/>
    <property type="project" value="TreeGrafter"/>
</dbReference>
<dbReference type="GO" id="GO:0005509">
    <property type="term" value="F:calcium ion binding"/>
    <property type="evidence" value="ECO:0007669"/>
    <property type="project" value="UniProtKB-UniRule"/>
</dbReference>
<dbReference type="GO" id="GO:0020037">
    <property type="term" value="F:heme binding"/>
    <property type="evidence" value="ECO:0007669"/>
    <property type="project" value="InterPro"/>
</dbReference>
<dbReference type="GO" id="GO:0005506">
    <property type="term" value="F:iron ion binding"/>
    <property type="evidence" value="ECO:0007669"/>
    <property type="project" value="UniProtKB-UniRule"/>
</dbReference>
<dbReference type="GO" id="GO:0042279">
    <property type="term" value="F:nitrite reductase (cytochrome, ammonia-forming) activity"/>
    <property type="evidence" value="ECO:0007669"/>
    <property type="project" value="UniProtKB-UniRule"/>
</dbReference>
<dbReference type="GO" id="GO:0019645">
    <property type="term" value="P:anaerobic electron transport chain"/>
    <property type="evidence" value="ECO:0007669"/>
    <property type="project" value="TreeGrafter"/>
</dbReference>
<dbReference type="GO" id="GO:0042128">
    <property type="term" value="P:nitrate assimilation"/>
    <property type="evidence" value="ECO:0007669"/>
    <property type="project" value="UniProtKB-UniRule"/>
</dbReference>
<dbReference type="CDD" id="cd00548">
    <property type="entry name" value="NrfA-like"/>
    <property type="match status" value="1"/>
</dbReference>
<dbReference type="FunFam" id="1.10.1130.10:FF:000002">
    <property type="entry name" value="Cytochrome c-552"/>
    <property type="match status" value="1"/>
</dbReference>
<dbReference type="FunFam" id="1.20.140.10:FF:000014">
    <property type="entry name" value="Cytochrome c-552"/>
    <property type="match status" value="1"/>
</dbReference>
<dbReference type="Gene3D" id="1.20.140.10">
    <property type="entry name" value="Butyryl-CoA Dehydrogenase, subunit A, domain 3"/>
    <property type="match status" value="1"/>
</dbReference>
<dbReference type="Gene3D" id="1.10.1130.10">
    <property type="entry name" value="Flavocytochrome C3, Chain A"/>
    <property type="match status" value="1"/>
</dbReference>
<dbReference type="HAMAP" id="MF_01182">
    <property type="entry name" value="Cytochrom_C552"/>
    <property type="match status" value="1"/>
</dbReference>
<dbReference type="InterPro" id="IPR003321">
    <property type="entry name" value="Cyt_c552"/>
</dbReference>
<dbReference type="InterPro" id="IPR017570">
    <property type="entry name" value="Cyt_c_NO2Rdtase_formate-dep"/>
</dbReference>
<dbReference type="InterPro" id="IPR036280">
    <property type="entry name" value="Multihaem_cyt_sf"/>
</dbReference>
<dbReference type="NCBIfam" id="TIGR03152">
    <property type="entry name" value="cyto_c552_HCOOH"/>
    <property type="match status" value="1"/>
</dbReference>
<dbReference type="NCBIfam" id="NF008339">
    <property type="entry name" value="PRK11125.1"/>
    <property type="match status" value="1"/>
</dbReference>
<dbReference type="PANTHER" id="PTHR30633:SF0">
    <property type="entry name" value="CYTOCHROME C-552"/>
    <property type="match status" value="1"/>
</dbReference>
<dbReference type="PANTHER" id="PTHR30633">
    <property type="entry name" value="CYTOCHROME C-552 RESPIRATORY NITRITE REDUCTASE"/>
    <property type="match status" value="1"/>
</dbReference>
<dbReference type="Pfam" id="PF02335">
    <property type="entry name" value="Cytochrom_C552"/>
    <property type="match status" value="1"/>
</dbReference>
<dbReference type="PIRSF" id="PIRSF000243">
    <property type="entry name" value="Cyt_c552"/>
    <property type="match status" value="1"/>
</dbReference>
<dbReference type="SUPFAM" id="SSF48695">
    <property type="entry name" value="Multiheme cytochromes"/>
    <property type="match status" value="1"/>
</dbReference>
<dbReference type="PROSITE" id="PS51008">
    <property type="entry name" value="MULTIHEME_CYTC"/>
    <property type="match status" value="1"/>
</dbReference>
<proteinExistence type="inferred from homology"/>
<sequence length="478" mass="53787">MARKTLRARRFFSLIFPFFFITSVYAEQTPESAKTVTVEAKNEMFAPQHPDQYQSWKATSEQSAREDALAEDPRLVILWAGYPFSRDYNKPRGHAYAVTDVRETLRTGAPKTAEDGPLPMACWSCKSPDVARLIQQEGEDGYFHGKWARGGPEIVNDLGCADCHNTASDDFAQGKPALTLSRPYAERAMEAIGKPFDKAGRFDQQSMVCGQCHVEYYFDGKNKAVKFPWDEGMKVENMEQYYDAIAFSDWTNSLSKTPMLKAQHPEYETWSAGIHGKNNVTCIDCHMPKVQNAEGKLYTDHKIGNPFDNFAQTCANCHTQDKASLQKVVAERKQAIHDLKIKVEDQLVHAHFEAKAAWDAGATDAEMKPILNDIRHAQWRWDLAIASHGIHMHAPEEGLRMLGSAMDKAADARTKLARLLATKGITHEIPLPDISTKEKAQKAIGLNMQQINAEKQDFLKTVVPQWEDQARKNGLLSQ</sequence>
<organism>
    <name type="scientific">Salmonella gallinarum (strain 287/91 / NCTC 13346)</name>
    <dbReference type="NCBI Taxonomy" id="550538"/>
    <lineage>
        <taxon>Bacteria</taxon>
        <taxon>Pseudomonadati</taxon>
        <taxon>Pseudomonadota</taxon>
        <taxon>Gammaproteobacteria</taxon>
        <taxon>Enterobacterales</taxon>
        <taxon>Enterobacteriaceae</taxon>
        <taxon>Salmonella</taxon>
    </lineage>
</organism>
<comment type="function">
    <text evidence="1">Catalyzes the reduction of nitrite to ammonia, consuming six electrons in the process.</text>
</comment>
<comment type="catalytic activity">
    <reaction evidence="1">
        <text>6 Fe(III)-[cytochrome c] + NH4(+) + 2 H2O = 6 Fe(II)-[cytochrome c] + nitrite + 8 H(+)</text>
        <dbReference type="Rhea" id="RHEA:13089"/>
        <dbReference type="Rhea" id="RHEA-COMP:10350"/>
        <dbReference type="Rhea" id="RHEA-COMP:14399"/>
        <dbReference type="ChEBI" id="CHEBI:15377"/>
        <dbReference type="ChEBI" id="CHEBI:15378"/>
        <dbReference type="ChEBI" id="CHEBI:16301"/>
        <dbReference type="ChEBI" id="CHEBI:28938"/>
        <dbReference type="ChEBI" id="CHEBI:29033"/>
        <dbReference type="ChEBI" id="CHEBI:29034"/>
        <dbReference type="EC" id="1.7.2.2"/>
    </reaction>
</comment>
<comment type="cofactor">
    <cofactor evidence="1">
        <name>Ca(2+)</name>
        <dbReference type="ChEBI" id="CHEBI:29108"/>
    </cofactor>
    <text evidence="1">Binds 1 Ca(2+) ion per monomer.</text>
</comment>
<comment type="cofactor">
    <cofactor evidence="1">
        <name>heme c</name>
        <dbReference type="ChEBI" id="CHEBI:61717"/>
    </cofactor>
    <text evidence="1">Binds 5 heme c groups covalently per monomer.</text>
</comment>
<comment type="pathway">
    <text evidence="1">Nitrogen metabolism; nitrate reduction (assimilation).</text>
</comment>
<comment type="subcellular location">
    <subcellularLocation>
        <location evidence="1">Periplasm</location>
    </subcellularLocation>
</comment>
<comment type="similarity">
    <text evidence="1">Belongs to the cytochrome c-552 family.</text>
</comment>
<gene>
    <name evidence="1" type="primary">nrfA</name>
    <name type="ordered locus">SG4121</name>
</gene>
<reference key="1">
    <citation type="journal article" date="2008" name="Genome Res.">
        <title>Comparative genome analysis of Salmonella enteritidis PT4 and Salmonella gallinarum 287/91 provides insights into evolutionary and host adaptation pathways.</title>
        <authorList>
            <person name="Thomson N.R."/>
            <person name="Clayton D.J."/>
            <person name="Windhorst D."/>
            <person name="Vernikos G."/>
            <person name="Davidson S."/>
            <person name="Churcher C."/>
            <person name="Quail M.A."/>
            <person name="Stevens M."/>
            <person name="Jones M.A."/>
            <person name="Watson M."/>
            <person name="Barron A."/>
            <person name="Layton A."/>
            <person name="Pickard D."/>
            <person name="Kingsley R.A."/>
            <person name="Bignell A."/>
            <person name="Clark L."/>
            <person name="Harris B."/>
            <person name="Ormond D."/>
            <person name="Abdellah Z."/>
            <person name="Brooks K."/>
            <person name="Cherevach I."/>
            <person name="Chillingworth T."/>
            <person name="Woodward J."/>
            <person name="Norberczak H."/>
            <person name="Lord A."/>
            <person name="Arrowsmith C."/>
            <person name="Jagels K."/>
            <person name="Moule S."/>
            <person name="Mungall K."/>
            <person name="Saunders M."/>
            <person name="Whitehead S."/>
            <person name="Chabalgoity J.A."/>
            <person name="Maskell D."/>
            <person name="Humphreys T."/>
            <person name="Roberts M."/>
            <person name="Barrow P.A."/>
            <person name="Dougan G."/>
            <person name="Parkhill J."/>
        </authorList>
    </citation>
    <scope>NUCLEOTIDE SEQUENCE [LARGE SCALE GENOMIC DNA]</scope>
    <source>
        <strain>287/91 / NCTC 13346</strain>
    </source>
</reference>